<protein>
    <recommendedName>
        <fullName>Rubredoxin</fullName>
        <shortName>Rd</shortName>
        <ecNumber>1.-.-.-</ecNumber>
    </recommendedName>
</protein>
<reference key="1">
    <citation type="journal article" date="2001" name="Biochem. Biophys. Res. Commun.">
        <title>Identification of the gene encoding NADH-rubredoxin oxidoreductase in Clostridium acetobutylicum.</title>
        <authorList>
            <person name="Guedon E."/>
            <person name="Petitdemange H."/>
        </authorList>
    </citation>
    <scope>NUCLEOTIDE SEQUENCE [GENOMIC DNA]</scope>
    <source>
        <strain>ATCC 824 / DSM 792 / JCM 1419 / IAM 19013 / LMG 5710 / NBRC 13948 / NRRL B-527 / VKM B-1787 / 2291 / W</strain>
    </source>
</reference>
<reference key="2">
    <citation type="journal article" date="2001" name="J. Bacteriol.">
        <title>Genome sequence and comparative analysis of the solvent-producing bacterium Clostridium acetobutylicum.</title>
        <authorList>
            <person name="Noelling J."/>
            <person name="Breton G."/>
            <person name="Omelchenko M.V."/>
            <person name="Makarova K.S."/>
            <person name="Zeng Q."/>
            <person name="Gibson R."/>
            <person name="Lee H.M."/>
            <person name="Dubois J."/>
            <person name="Qiu D."/>
            <person name="Hitti J."/>
            <person name="Wolf Y.I."/>
            <person name="Tatusov R.L."/>
            <person name="Sabathe F."/>
            <person name="Doucette-Stamm L.A."/>
            <person name="Soucaille P."/>
            <person name="Daly M.J."/>
            <person name="Bennett G.N."/>
            <person name="Koonin E.V."/>
            <person name="Smith D.R."/>
        </authorList>
    </citation>
    <scope>NUCLEOTIDE SEQUENCE [LARGE SCALE GENOMIC DNA]</scope>
    <source>
        <strain>ATCC 824 / DSM 792 / JCM 1419 / IAM 19013 / LMG 5710 / NBRC 13948 / NRRL B-527 / VKM B-1787 / 2291 / W</strain>
    </source>
</reference>
<reference key="3">
    <citation type="journal article" date="2009" name="Appl. Environ. Microbiol.">
        <title>O2 and reactive oxygen species detoxification complex, composed of O2-responsive NADH:rubredoxin oxidoreductase-flavoprotein A2-desulfoferrodoxin operon enzymes, rubperoxin, and rubredoxin, in Clostridium acetobutylicum.</title>
        <authorList>
            <person name="Kawasaki S."/>
            <person name="Sakai Y."/>
            <person name="Takahashi T."/>
            <person name="Suzuki I."/>
            <person name="Niimura Y."/>
        </authorList>
    </citation>
    <scope>PROTEIN SEQUENCE OF 1-20</scope>
    <scope>FUNCTION</scope>
    <scope>COFACTOR</scope>
    <source>
        <strain>ATCC 824 / DSM 792 / JCM 1419 / IAM 19013 / LMG 5710 / NBRC 13948 / NRRL B-527 / VKM B-1787 / 2291 / W</strain>
    </source>
</reference>
<reference key="4">
    <citation type="journal article" date="2007" name="FEBS Lett.">
        <title>Desulfoferrodoxin of Clostridium acetobutylicum functions as a superoxide reductase.</title>
        <authorList>
            <person name="Riebe O."/>
            <person name="Fischer R.J."/>
            <person name="Bahl H."/>
        </authorList>
    </citation>
    <scope>FUNCTION</scope>
    <source>
        <strain>ATCC 824 / DSM 792 / JCM 1419 / IAM 19013 / LMG 5710 / NBRC 13948 / NRRL B-527 / VKM B-1787 / 2291 / W</strain>
    </source>
</reference>
<reference key="5">
    <citation type="journal article" date="2009" name="FEBS Lett.">
        <title>Reductive dioxygen scavenging by flavo-diiron proteins of Clostridium acetobutylicum.</title>
        <authorList>
            <person name="Hillmann F."/>
            <person name="Riebe O."/>
            <person name="Fischer R.J."/>
            <person name="Mot A."/>
            <person name="Caranto J.D."/>
            <person name="Kurtz D.M. Jr."/>
            <person name="Bahl H."/>
        </authorList>
    </citation>
    <scope>FUNCTION</scope>
    <source>
        <strain>ATCC 824 / DSM 792 / JCM 1419 / IAM 19013 / LMG 5710 / NBRC 13948 / NRRL B-527 / VKM B-1787 / 2291 / W</strain>
    </source>
</reference>
<reference key="6">
    <citation type="journal article" date="2009" name="J. Bacteriol.">
        <title>The role of PerR in O2-affected gene expression of Clostridium acetobutylicum.</title>
        <authorList>
            <person name="Hillmann F."/>
            <person name="Doring C."/>
            <person name="Riebe O."/>
            <person name="Ehrenreich A."/>
            <person name="Fischer R.J."/>
            <person name="Bahl H."/>
        </authorList>
    </citation>
    <scope>INDUCTION BY O(2)</scope>
    <scope>REPRESSION BY PERR</scope>
    <source>
        <strain>ATCC 824 / DSM 792 / JCM 1419 / IAM 19013 / LMG 5710 / NBRC 13948 / NRRL B-527 / VKM B-1787 / 2291 / W</strain>
    </source>
</reference>
<reference key="7">
    <citation type="journal article" date="2009" name="Microbiology">
        <title>Pathway for H2O2 and O2 detoxification in Clostridium acetobutylicum.</title>
        <authorList>
            <person name="Riebe O."/>
            <person name="Fischer R.J."/>
            <person name="Wampler D.A."/>
            <person name="Kurtz D.M. Jr."/>
            <person name="Bahl H."/>
        </authorList>
    </citation>
    <scope>FUNCTION</scope>
    <scope>COFACTOR</scope>
    <source>
        <strain>ATCC 824 / DSM 792 / JCM 1419 / IAM 19013 / LMG 5710 / NBRC 13948 / NRRL B-527 / VKM B-1787 / 2291 / W</strain>
    </source>
</reference>
<proteinExistence type="evidence at protein level"/>
<keyword id="KW-0216">Detoxification</keyword>
<keyword id="KW-0903">Direct protein sequencing</keyword>
<keyword id="KW-0249">Electron transport</keyword>
<keyword id="KW-0408">Iron</keyword>
<keyword id="KW-0479">Metal-binding</keyword>
<keyword id="KW-0560">Oxidoreductase</keyword>
<keyword id="KW-1185">Reference proteome</keyword>
<keyword id="KW-0346">Stress response</keyword>
<keyword id="KW-0813">Transport</keyword>
<sequence length="54" mass="5930">MKKYVCVVCGYIYDPAEGDPDNGVNPGTSFEDIPDDWVCPLCGVGKDQFEPSEE</sequence>
<comment type="function">
    <text evidence="2 3 4 5">Rubredoxin is a small nonheme, iron protein lacking acid-labile sulfide. Its single Fe, chelated to 4 Cys, functions as an electron acceptor and may also stabilize the conformation of the molecule. Functions as an intermediate component in the electron transfer chain: NADH-&gt;NROR-&gt;Rd-&gt;FprA1/2 in which Rd serves as the proximal electron donor to the FDPs that exhibit H(2)O-forming NADH oxidase activity. Also functions as the proximal electron donor to the Dfx and revRbr proteins that display superoxide reductase (SOR) and NADH peroxidase activity, respectively. Therefore, is a key electron carrier in an efficient multienzyme complex that can scavenge O(2) and reactive oxygen species (ROS), and thus plays an important role in the oxidative stress defense system in C.acetobutylicum, an obligate anaerobic bacterium.</text>
</comment>
<comment type="cofactor">
    <cofactor evidence="4 5">
        <name>Fe(3+)</name>
        <dbReference type="ChEBI" id="CHEBI:29034"/>
    </cofactor>
    <text evidence="4 5">Binds 1 Fe(3+) ion per subunit.</text>
</comment>
<comment type="induction">
    <text evidence="6">Up-regulated upon exposure to O(2). Repressed by PerR.</text>
</comment>
<comment type="similarity">
    <text evidence="7">Belongs to the rubredoxin family.</text>
</comment>
<dbReference type="EC" id="1.-.-.-"/>
<dbReference type="EMBL" id="AY026864">
    <property type="protein sequence ID" value="AAK07690.1"/>
    <property type="molecule type" value="Genomic_DNA"/>
</dbReference>
<dbReference type="EMBL" id="AE001437">
    <property type="protein sequence ID" value="AAK80722.1"/>
    <property type="molecule type" value="Genomic_DNA"/>
</dbReference>
<dbReference type="PIR" id="G97241">
    <property type="entry name" value="G97241"/>
</dbReference>
<dbReference type="RefSeq" id="NP_349382.1">
    <property type="nucleotide sequence ID" value="NC_003030.1"/>
</dbReference>
<dbReference type="RefSeq" id="WP_010966063.1">
    <property type="nucleotide sequence ID" value="NC_003030.1"/>
</dbReference>
<dbReference type="SMR" id="Q9AL94"/>
<dbReference type="STRING" id="272562.CA_C2778"/>
<dbReference type="GeneID" id="44999264"/>
<dbReference type="KEGG" id="cac:CA_C2778"/>
<dbReference type="PATRIC" id="fig|272562.8.peg.2965"/>
<dbReference type="eggNOG" id="COG1773">
    <property type="taxonomic scope" value="Bacteria"/>
</dbReference>
<dbReference type="HOGENOM" id="CLU_128747_3_3_9"/>
<dbReference type="OrthoDB" id="9758182at2"/>
<dbReference type="SABIO-RK" id="Q9AL94"/>
<dbReference type="Proteomes" id="UP000000814">
    <property type="component" value="Chromosome"/>
</dbReference>
<dbReference type="GO" id="GO:0009055">
    <property type="term" value="F:electron transfer activity"/>
    <property type="evidence" value="ECO:0000314"/>
    <property type="project" value="UniProtKB"/>
</dbReference>
<dbReference type="GO" id="GO:0005506">
    <property type="term" value="F:iron ion binding"/>
    <property type="evidence" value="ECO:0000314"/>
    <property type="project" value="UniProtKB"/>
</dbReference>
<dbReference type="GO" id="GO:0016491">
    <property type="term" value="F:oxidoreductase activity"/>
    <property type="evidence" value="ECO:0007669"/>
    <property type="project" value="UniProtKB-KW"/>
</dbReference>
<dbReference type="GO" id="GO:0043448">
    <property type="term" value="P:alkane catabolic process"/>
    <property type="evidence" value="ECO:0007669"/>
    <property type="project" value="TreeGrafter"/>
</dbReference>
<dbReference type="GO" id="GO:0072592">
    <property type="term" value="P:oxygen metabolic process"/>
    <property type="evidence" value="ECO:0000314"/>
    <property type="project" value="UniProtKB"/>
</dbReference>
<dbReference type="GO" id="GO:0009636">
    <property type="term" value="P:response to toxic substance"/>
    <property type="evidence" value="ECO:0007669"/>
    <property type="project" value="UniProtKB-KW"/>
</dbReference>
<dbReference type="CDD" id="cd00730">
    <property type="entry name" value="rubredoxin"/>
    <property type="match status" value="1"/>
</dbReference>
<dbReference type="FunFam" id="2.20.28.10:FF:000001">
    <property type="entry name" value="Rubredoxin"/>
    <property type="match status" value="1"/>
</dbReference>
<dbReference type="Gene3D" id="2.20.28.10">
    <property type="match status" value="1"/>
</dbReference>
<dbReference type="InterPro" id="IPR024922">
    <property type="entry name" value="Rubredoxin"/>
</dbReference>
<dbReference type="InterPro" id="IPR024934">
    <property type="entry name" value="Rubredoxin-like_dom"/>
</dbReference>
<dbReference type="InterPro" id="IPR024935">
    <property type="entry name" value="Rubredoxin_dom"/>
</dbReference>
<dbReference type="InterPro" id="IPR050526">
    <property type="entry name" value="Rubredoxin_ET"/>
</dbReference>
<dbReference type="InterPro" id="IPR018527">
    <property type="entry name" value="Rubredoxin_Fe_BS"/>
</dbReference>
<dbReference type="NCBIfam" id="NF045768">
    <property type="entry name" value="RubredRD"/>
    <property type="match status" value="1"/>
</dbReference>
<dbReference type="PANTHER" id="PTHR47627">
    <property type="entry name" value="RUBREDOXIN"/>
    <property type="match status" value="1"/>
</dbReference>
<dbReference type="PANTHER" id="PTHR47627:SF1">
    <property type="entry name" value="RUBREDOXIN-1-RELATED"/>
    <property type="match status" value="1"/>
</dbReference>
<dbReference type="Pfam" id="PF00301">
    <property type="entry name" value="Rubredoxin"/>
    <property type="match status" value="1"/>
</dbReference>
<dbReference type="PIRSF" id="PIRSF000071">
    <property type="entry name" value="Rubredoxin"/>
    <property type="match status" value="1"/>
</dbReference>
<dbReference type="PRINTS" id="PR00163">
    <property type="entry name" value="RUBREDOXIN"/>
</dbReference>
<dbReference type="SUPFAM" id="SSF57802">
    <property type="entry name" value="Rubredoxin-like"/>
    <property type="match status" value="1"/>
</dbReference>
<dbReference type="PROSITE" id="PS00202">
    <property type="entry name" value="RUBREDOXIN"/>
    <property type="match status" value="1"/>
</dbReference>
<dbReference type="PROSITE" id="PS50903">
    <property type="entry name" value="RUBREDOXIN_LIKE"/>
    <property type="match status" value="1"/>
</dbReference>
<gene>
    <name type="primary">rd</name>
    <name type="ordered locus">CA_C2778</name>
</gene>
<organism>
    <name type="scientific">Clostridium acetobutylicum (strain ATCC 824 / DSM 792 / JCM 1419 / IAM 19013 / LMG 5710 / NBRC 13948 / NRRL B-527 / VKM B-1787 / 2291 / W)</name>
    <dbReference type="NCBI Taxonomy" id="272562"/>
    <lineage>
        <taxon>Bacteria</taxon>
        <taxon>Bacillati</taxon>
        <taxon>Bacillota</taxon>
        <taxon>Clostridia</taxon>
        <taxon>Eubacteriales</taxon>
        <taxon>Clostridiaceae</taxon>
        <taxon>Clostridium</taxon>
    </lineage>
</organism>
<evidence type="ECO:0000255" key="1">
    <source>
        <dbReference type="PROSITE-ProRule" id="PRU00241"/>
    </source>
</evidence>
<evidence type="ECO:0000269" key="2">
    <source>
    </source>
</evidence>
<evidence type="ECO:0000269" key="3">
    <source>
    </source>
</evidence>
<evidence type="ECO:0000269" key="4">
    <source>
    </source>
</evidence>
<evidence type="ECO:0000269" key="5">
    <source>
    </source>
</evidence>
<evidence type="ECO:0000269" key="6">
    <source>
    </source>
</evidence>
<evidence type="ECO:0000305" key="7"/>
<name>RUBR_CLOAB</name>
<accession>Q9AL94</accession>
<feature type="chain" id="PRO_0000135029" description="Rubredoxin">
    <location>
        <begin position="1"/>
        <end position="54"/>
    </location>
</feature>
<feature type="domain" description="Rubredoxin-like" evidence="1">
    <location>
        <begin position="1"/>
        <end position="54"/>
    </location>
</feature>
<feature type="binding site" evidence="1">
    <location>
        <position position="6"/>
    </location>
    <ligand>
        <name>Fe cation</name>
        <dbReference type="ChEBI" id="CHEBI:24875"/>
    </ligand>
</feature>
<feature type="binding site" evidence="1">
    <location>
        <position position="9"/>
    </location>
    <ligand>
        <name>Fe cation</name>
        <dbReference type="ChEBI" id="CHEBI:24875"/>
    </ligand>
</feature>
<feature type="binding site" evidence="1">
    <location>
        <position position="39"/>
    </location>
    <ligand>
        <name>Fe cation</name>
        <dbReference type="ChEBI" id="CHEBI:24875"/>
    </ligand>
</feature>
<feature type="binding site" evidence="1">
    <location>
        <position position="42"/>
    </location>
    <ligand>
        <name>Fe cation</name>
        <dbReference type="ChEBI" id="CHEBI:24875"/>
    </ligand>
</feature>